<evidence type="ECO:0000255" key="1">
    <source>
        <dbReference type="HAMAP-Rule" id="MF_00141"/>
    </source>
</evidence>
<proteinExistence type="inferred from homology"/>
<accession>A4W5P1</accession>
<keyword id="KW-0963">Cytoplasm</keyword>
<keyword id="KW-0251">Elongation factor</keyword>
<keyword id="KW-0379">Hydroxylation</keyword>
<keyword id="KW-0648">Protein biosynthesis</keyword>
<feature type="chain" id="PRO_1000057923" description="Elongation factor P">
    <location>
        <begin position="1"/>
        <end position="188"/>
    </location>
</feature>
<feature type="modified residue" description="N6-(3,6-diaminohexanoyl)-5-hydroxylysine" evidence="1">
    <location>
        <position position="34"/>
    </location>
</feature>
<gene>
    <name evidence="1" type="primary">efp</name>
    <name type="ordered locus">Ent638_0333</name>
</gene>
<dbReference type="EMBL" id="CP000653">
    <property type="protein sequence ID" value="ABP59021.1"/>
    <property type="molecule type" value="Genomic_DNA"/>
</dbReference>
<dbReference type="RefSeq" id="WP_011915594.1">
    <property type="nucleotide sequence ID" value="NC_009436.1"/>
</dbReference>
<dbReference type="SMR" id="A4W5P1"/>
<dbReference type="STRING" id="399742.Ent638_0333"/>
<dbReference type="GeneID" id="93307512"/>
<dbReference type="KEGG" id="ent:Ent638_0333"/>
<dbReference type="eggNOG" id="COG0231">
    <property type="taxonomic scope" value="Bacteria"/>
</dbReference>
<dbReference type="HOGENOM" id="CLU_074944_0_0_6"/>
<dbReference type="OrthoDB" id="9801844at2"/>
<dbReference type="UniPathway" id="UPA00345"/>
<dbReference type="Proteomes" id="UP000000230">
    <property type="component" value="Chromosome"/>
</dbReference>
<dbReference type="GO" id="GO:0005829">
    <property type="term" value="C:cytosol"/>
    <property type="evidence" value="ECO:0007669"/>
    <property type="project" value="UniProtKB-ARBA"/>
</dbReference>
<dbReference type="GO" id="GO:0003746">
    <property type="term" value="F:translation elongation factor activity"/>
    <property type="evidence" value="ECO:0007669"/>
    <property type="project" value="UniProtKB-UniRule"/>
</dbReference>
<dbReference type="GO" id="GO:0043043">
    <property type="term" value="P:peptide biosynthetic process"/>
    <property type="evidence" value="ECO:0007669"/>
    <property type="project" value="InterPro"/>
</dbReference>
<dbReference type="CDD" id="cd04470">
    <property type="entry name" value="S1_EF-P_repeat_1"/>
    <property type="match status" value="1"/>
</dbReference>
<dbReference type="CDD" id="cd05794">
    <property type="entry name" value="S1_EF-P_repeat_2"/>
    <property type="match status" value="1"/>
</dbReference>
<dbReference type="FunFam" id="2.30.30.30:FF:000003">
    <property type="entry name" value="Elongation factor P"/>
    <property type="match status" value="1"/>
</dbReference>
<dbReference type="FunFam" id="2.40.50.140:FF:000004">
    <property type="entry name" value="Elongation factor P"/>
    <property type="match status" value="1"/>
</dbReference>
<dbReference type="FunFam" id="2.40.50.140:FF:000009">
    <property type="entry name" value="Elongation factor P"/>
    <property type="match status" value="1"/>
</dbReference>
<dbReference type="Gene3D" id="2.30.30.30">
    <property type="match status" value="1"/>
</dbReference>
<dbReference type="Gene3D" id="2.40.50.140">
    <property type="entry name" value="Nucleic acid-binding proteins"/>
    <property type="match status" value="2"/>
</dbReference>
<dbReference type="HAMAP" id="MF_00141">
    <property type="entry name" value="EF_P"/>
    <property type="match status" value="1"/>
</dbReference>
<dbReference type="InterPro" id="IPR015365">
    <property type="entry name" value="Elong-fact-P_C"/>
</dbReference>
<dbReference type="InterPro" id="IPR012340">
    <property type="entry name" value="NA-bd_OB-fold"/>
</dbReference>
<dbReference type="InterPro" id="IPR014722">
    <property type="entry name" value="Rib_uL2_dom2"/>
</dbReference>
<dbReference type="InterPro" id="IPR020599">
    <property type="entry name" value="Transl_elong_fac_P/YeiP"/>
</dbReference>
<dbReference type="InterPro" id="IPR013185">
    <property type="entry name" value="Transl_elong_KOW-like"/>
</dbReference>
<dbReference type="InterPro" id="IPR001059">
    <property type="entry name" value="Transl_elong_P/YeiP_cen"/>
</dbReference>
<dbReference type="InterPro" id="IPR013852">
    <property type="entry name" value="Transl_elong_P/YeiP_CS"/>
</dbReference>
<dbReference type="InterPro" id="IPR011768">
    <property type="entry name" value="Transl_elongation_fac_P"/>
</dbReference>
<dbReference type="InterPro" id="IPR008991">
    <property type="entry name" value="Translation_prot_SH3-like_sf"/>
</dbReference>
<dbReference type="NCBIfam" id="TIGR00038">
    <property type="entry name" value="efp"/>
    <property type="match status" value="1"/>
</dbReference>
<dbReference type="NCBIfam" id="NF001810">
    <property type="entry name" value="PRK00529.1"/>
    <property type="match status" value="1"/>
</dbReference>
<dbReference type="PANTHER" id="PTHR30053">
    <property type="entry name" value="ELONGATION FACTOR P"/>
    <property type="match status" value="1"/>
</dbReference>
<dbReference type="PANTHER" id="PTHR30053:SF12">
    <property type="entry name" value="ELONGATION FACTOR P (EF-P) FAMILY PROTEIN"/>
    <property type="match status" value="1"/>
</dbReference>
<dbReference type="Pfam" id="PF01132">
    <property type="entry name" value="EFP"/>
    <property type="match status" value="1"/>
</dbReference>
<dbReference type="Pfam" id="PF08207">
    <property type="entry name" value="EFP_N"/>
    <property type="match status" value="1"/>
</dbReference>
<dbReference type="Pfam" id="PF09285">
    <property type="entry name" value="Elong-fact-P_C"/>
    <property type="match status" value="1"/>
</dbReference>
<dbReference type="PIRSF" id="PIRSF005901">
    <property type="entry name" value="EF-P"/>
    <property type="match status" value="1"/>
</dbReference>
<dbReference type="SMART" id="SM01185">
    <property type="entry name" value="EFP"/>
    <property type="match status" value="1"/>
</dbReference>
<dbReference type="SMART" id="SM00841">
    <property type="entry name" value="Elong-fact-P_C"/>
    <property type="match status" value="1"/>
</dbReference>
<dbReference type="SUPFAM" id="SSF50249">
    <property type="entry name" value="Nucleic acid-binding proteins"/>
    <property type="match status" value="2"/>
</dbReference>
<dbReference type="SUPFAM" id="SSF50104">
    <property type="entry name" value="Translation proteins SH3-like domain"/>
    <property type="match status" value="1"/>
</dbReference>
<dbReference type="PROSITE" id="PS01275">
    <property type="entry name" value="EFP"/>
    <property type="match status" value="1"/>
</dbReference>
<sequence>MATYYSNDFRAGLKIMMDGEPYAVEASEFVKPGKGQAFARVKLRRLLTGTRVEKTFKSTDSAEGADVVDMNLTYLYNDGEFYHFMNNTTFEQLSADEKAVGENAKWLLDQAECIVTLWNGQPISVTPPNFVELEIIETDPGLKGDTAGTGGKPAKLSTGAVVKVPLFVQTGEVIKVDTRSGEYVSRVK</sequence>
<reference key="1">
    <citation type="journal article" date="2010" name="PLoS Genet.">
        <title>Genome sequence of the plant growth promoting endophytic bacterium Enterobacter sp. 638.</title>
        <authorList>
            <person name="Taghavi S."/>
            <person name="van der Lelie D."/>
            <person name="Hoffman A."/>
            <person name="Zhang Y.B."/>
            <person name="Walla M.D."/>
            <person name="Vangronsveld J."/>
            <person name="Newman L."/>
            <person name="Monchy S."/>
        </authorList>
    </citation>
    <scope>NUCLEOTIDE SEQUENCE [LARGE SCALE GENOMIC DNA]</scope>
    <source>
        <strain>638</strain>
    </source>
</reference>
<organism>
    <name type="scientific">Enterobacter sp. (strain 638)</name>
    <dbReference type="NCBI Taxonomy" id="399742"/>
    <lineage>
        <taxon>Bacteria</taxon>
        <taxon>Pseudomonadati</taxon>
        <taxon>Pseudomonadota</taxon>
        <taxon>Gammaproteobacteria</taxon>
        <taxon>Enterobacterales</taxon>
        <taxon>Enterobacteriaceae</taxon>
        <taxon>Enterobacter</taxon>
    </lineage>
</organism>
<comment type="function">
    <text evidence="1">Involved in peptide bond synthesis. Alleviates ribosome stalling that occurs when 3 or more consecutive Pro residues or the sequence PPG is present in a protein, possibly by augmenting the peptidyl transferase activity of the ribosome. Modification of Lys-34 is required for alleviation.</text>
</comment>
<comment type="pathway">
    <text evidence="1">Protein biosynthesis; polypeptide chain elongation.</text>
</comment>
<comment type="subcellular location">
    <subcellularLocation>
        <location evidence="1">Cytoplasm</location>
    </subcellularLocation>
</comment>
<comment type="PTM">
    <text evidence="1">May be beta-lysylated on the epsilon-amino group of Lys-34 by the combined action of EpmA and EpmB, and then hydroxylated on the C5 position of the same residue by EpmC (if this protein is present). Lysylation is critical for the stimulatory effect of EF-P on peptide-bond formation. The lysylation moiety may extend toward the peptidyltransferase center and stabilize the terminal 3-CCA end of the tRNA. Hydroxylation of the C5 position on Lys-34 may allow additional potential stabilizing hydrogen-bond interactions with the P-tRNA.</text>
</comment>
<comment type="similarity">
    <text evidence="1">Belongs to the elongation factor P family.</text>
</comment>
<protein>
    <recommendedName>
        <fullName evidence="1">Elongation factor P</fullName>
        <shortName evidence="1">EF-P</shortName>
    </recommendedName>
</protein>
<name>EFP_ENT38</name>